<evidence type="ECO:0000255" key="1">
    <source>
        <dbReference type="HAMAP-Rule" id="MF_00169"/>
    </source>
</evidence>
<proteinExistence type="inferred from homology"/>
<dbReference type="EC" id="4.2.1.10" evidence="1"/>
<dbReference type="EMBL" id="CP001390">
    <property type="protein sequence ID" value="ACM21402.1"/>
    <property type="molecule type" value="Genomic_DNA"/>
</dbReference>
<dbReference type="RefSeq" id="WP_012648130.1">
    <property type="nucleotide sequence ID" value="NC_011979.1"/>
</dbReference>
<dbReference type="SMR" id="B9M3I1"/>
<dbReference type="STRING" id="316067.Geob_3059"/>
<dbReference type="KEGG" id="geo:Geob_3059"/>
<dbReference type="eggNOG" id="COG0757">
    <property type="taxonomic scope" value="Bacteria"/>
</dbReference>
<dbReference type="HOGENOM" id="CLU_090968_1_0_7"/>
<dbReference type="OrthoDB" id="9790793at2"/>
<dbReference type="UniPathway" id="UPA00053">
    <property type="reaction ID" value="UER00086"/>
</dbReference>
<dbReference type="Proteomes" id="UP000007721">
    <property type="component" value="Chromosome"/>
</dbReference>
<dbReference type="GO" id="GO:0003855">
    <property type="term" value="F:3-dehydroquinate dehydratase activity"/>
    <property type="evidence" value="ECO:0007669"/>
    <property type="project" value="UniProtKB-UniRule"/>
</dbReference>
<dbReference type="GO" id="GO:0008652">
    <property type="term" value="P:amino acid biosynthetic process"/>
    <property type="evidence" value="ECO:0007669"/>
    <property type="project" value="UniProtKB-KW"/>
</dbReference>
<dbReference type="GO" id="GO:0009073">
    <property type="term" value="P:aromatic amino acid family biosynthetic process"/>
    <property type="evidence" value="ECO:0007669"/>
    <property type="project" value="UniProtKB-KW"/>
</dbReference>
<dbReference type="GO" id="GO:0009423">
    <property type="term" value="P:chorismate biosynthetic process"/>
    <property type="evidence" value="ECO:0007669"/>
    <property type="project" value="UniProtKB-UniRule"/>
</dbReference>
<dbReference type="GO" id="GO:0019631">
    <property type="term" value="P:quinate catabolic process"/>
    <property type="evidence" value="ECO:0007669"/>
    <property type="project" value="TreeGrafter"/>
</dbReference>
<dbReference type="CDD" id="cd00466">
    <property type="entry name" value="DHQase_II"/>
    <property type="match status" value="1"/>
</dbReference>
<dbReference type="Gene3D" id="3.40.50.9100">
    <property type="entry name" value="Dehydroquinase, class II"/>
    <property type="match status" value="1"/>
</dbReference>
<dbReference type="HAMAP" id="MF_00169">
    <property type="entry name" value="AroQ"/>
    <property type="match status" value="1"/>
</dbReference>
<dbReference type="InterPro" id="IPR001874">
    <property type="entry name" value="DHquinase_II"/>
</dbReference>
<dbReference type="InterPro" id="IPR018509">
    <property type="entry name" value="DHquinase_II_CS"/>
</dbReference>
<dbReference type="InterPro" id="IPR036441">
    <property type="entry name" value="DHquinase_II_sf"/>
</dbReference>
<dbReference type="NCBIfam" id="TIGR01088">
    <property type="entry name" value="aroQ"/>
    <property type="match status" value="1"/>
</dbReference>
<dbReference type="NCBIfam" id="NF003804">
    <property type="entry name" value="PRK05395.1-1"/>
    <property type="match status" value="1"/>
</dbReference>
<dbReference type="NCBIfam" id="NF003805">
    <property type="entry name" value="PRK05395.1-2"/>
    <property type="match status" value="1"/>
</dbReference>
<dbReference type="NCBIfam" id="NF003806">
    <property type="entry name" value="PRK05395.1-3"/>
    <property type="match status" value="1"/>
</dbReference>
<dbReference type="NCBIfam" id="NF003807">
    <property type="entry name" value="PRK05395.1-4"/>
    <property type="match status" value="1"/>
</dbReference>
<dbReference type="PANTHER" id="PTHR21272">
    <property type="entry name" value="CATABOLIC 3-DEHYDROQUINASE"/>
    <property type="match status" value="1"/>
</dbReference>
<dbReference type="PANTHER" id="PTHR21272:SF3">
    <property type="entry name" value="CATABOLIC 3-DEHYDROQUINASE"/>
    <property type="match status" value="1"/>
</dbReference>
<dbReference type="Pfam" id="PF01220">
    <property type="entry name" value="DHquinase_II"/>
    <property type="match status" value="1"/>
</dbReference>
<dbReference type="PIRSF" id="PIRSF001399">
    <property type="entry name" value="DHquinase_II"/>
    <property type="match status" value="1"/>
</dbReference>
<dbReference type="SUPFAM" id="SSF52304">
    <property type="entry name" value="Type II 3-dehydroquinate dehydratase"/>
    <property type="match status" value="1"/>
</dbReference>
<dbReference type="PROSITE" id="PS01029">
    <property type="entry name" value="DEHYDROQUINASE_II"/>
    <property type="match status" value="1"/>
</dbReference>
<feature type="chain" id="PRO_1000123690" description="3-dehydroquinate dehydratase">
    <location>
        <begin position="1"/>
        <end position="144"/>
    </location>
</feature>
<feature type="active site" description="Proton acceptor" evidence="1">
    <location>
        <position position="22"/>
    </location>
</feature>
<feature type="active site" description="Proton donor" evidence="1">
    <location>
        <position position="99"/>
    </location>
</feature>
<feature type="binding site" evidence="1">
    <location>
        <position position="73"/>
    </location>
    <ligand>
        <name>substrate</name>
    </ligand>
</feature>
<feature type="binding site" evidence="1">
    <location>
        <position position="79"/>
    </location>
    <ligand>
        <name>substrate</name>
    </ligand>
</feature>
<feature type="binding site" evidence="1">
    <location>
        <position position="86"/>
    </location>
    <ligand>
        <name>substrate</name>
    </ligand>
</feature>
<feature type="binding site" evidence="1">
    <location>
        <begin position="100"/>
        <end position="101"/>
    </location>
    <ligand>
        <name>substrate</name>
    </ligand>
</feature>
<feature type="binding site" evidence="1">
    <location>
        <position position="110"/>
    </location>
    <ligand>
        <name>substrate</name>
    </ligand>
</feature>
<feature type="site" description="Transition state stabilizer" evidence="1">
    <location>
        <position position="17"/>
    </location>
</feature>
<keyword id="KW-0028">Amino-acid biosynthesis</keyword>
<keyword id="KW-0057">Aromatic amino acid biosynthesis</keyword>
<keyword id="KW-0456">Lyase</keyword>
<keyword id="KW-1185">Reference proteome</keyword>
<reference key="1">
    <citation type="submission" date="2009-01" db="EMBL/GenBank/DDBJ databases">
        <title>Complete sequence of Geobacter sp. FRC-32.</title>
        <authorList>
            <consortium name="US DOE Joint Genome Institute"/>
            <person name="Lucas S."/>
            <person name="Copeland A."/>
            <person name="Lapidus A."/>
            <person name="Glavina del Rio T."/>
            <person name="Dalin E."/>
            <person name="Tice H."/>
            <person name="Bruce D."/>
            <person name="Goodwin L."/>
            <person name="Pitluck S."/>
            <person name="Saunders E."/>
            <person name="Brettin T."/>
            <person name="Detter J.C."/>
            <person name="Han C."/>
            <person name="Larimer F."/>
            <person name="Land M."/>
            <person name="Hauser L."/>
            <person name="Kyrpides N."/>
            <person name="Ovchinnikova G."/>
            <person name="Kostka J."/>
            <person name="Richardson P."/>
        </authorList>
    </citation>
    <scope>NUCLEOTIDE SEQUENCE [LARGE SCALE GENOMIC DNA]</scope>
    <source>
        <strain>DSM 22248 / JCM 15807 / FRC-32</strain>
    </source>
</reference>
<name>AROQ_GEODF</name>
<sequence>MKILVLHGPNLNMLGTREPEIYGSLTLDDINAALSQLALDLGIEIECFQTNSEGRLVDRIQSAAGLFDGILINPAAYTHTSIAIRDAIAAAALPAVEVHLSNIHNREKFRTKSYIAPMAIGQICGFGADSYLLGLRAIFNHIKK</sequence>
<gene>
    <name evidence="1" type="primary">aroQ</name>
    <name type="ordered locus">Geob_3059</name>
</gene>
<protein>
    <recommendedName>
        <fullName evidence="1">3-dehydroquinate dehydratase</fullName>
        <shortName evidence="1">3-dehydroquinase</shortName>
        <ecNumber evidence="1">4.2.1.10</ecNumber>
    </recommendedName>
    <alternativeName>
        <fullName evidence="1">Type II DHQase</fullName>
    </alternativeName>
</protein>
<organism>
    <name type="scientific">Geotalea daltonii (strain DSM 22248 / JCM 15807 / FRC-32)</name>
    <name type="common">Geobacter daltonii</name>
    <dbReference type="NCBI Taxonomy" id="316067"/>
    <lineage>
        <taxon>Bacteria</taxon>
        <taxon>Pseudomonadati</taxon>
        <taxon>Thermodesulfobacteriota</taxon>
        <taxon>Desulfuromonadia</taxon>
        <taxon>Geobacterales</taxon>
        <taxon>Geobacteraceae</taxon>
        <taxon>Geotalea</taxon>
    </lineage>
</organism>
<accession>B9M3I1</accession>
<comment type="function">
    <text evidence="1">Catalyzes a trans-dehydration via an enolate intermediate.</text>
</comment>
<comment type="catalytic activity">
    <reaction evidence="1">
        <text>3-dehydroquinate = 3-dehydroshikimate + H2O</text>
        <dbReference type="Rhea" id="RHEA:21096"/>
        <dbReference type="ChEBI" id="CHEBI:15377"/>
        <dbReference type="ChEBI" id="CHEBI:16630"/>
        <dbReference type="ChEBI" id="CHEBI:32364"/>
        <dbReference type="EC" id="4.2.1.10"/>
    </reaction>
</comment>
<comment type="pathway">
    <text evidence="1">Metabolic intermediate biosynthesis; chorismate biosynthesis; chorismate from D-erythrose 4-phosphate and phosphoenolpyruvate: step 3/7.</text>
</comment>
<comment type="subunit">
    <text evidence="1">Homododecamer.</text>
</comment>
<comment type="similarity">
    <text evidence="1">Belongs to the type-II 3-dehydroquinase family.</text>
</comment>